<proteinExistence type="inferred from homology"/>
<gene>
    <name evidence="1" type="primary">uvrC</name>
    <name type="ordered locus">ACP_1243</name>
</gene>
<evidence type="ECO:0000255" key="1">
    <source>
        <dbReference type="HAMAP-Rule" id="MF_00203"/>
    </source>
</evidence>
<feature type="chain" id="PRO_1000200562" description="UvrABC system protein C">
    <location>
        <begin position="1"/>
        <end position="645"/>
    </location>
</feature>
<feature type="domain" description="GIY-YIG" evidence="1">
    <location>
        <begin position="12"/>
        <end position="91"/>
    </location>
</feature>
<feature type="domain" description="UVR" evidence="1">
    <location>
        <begin position="202"/>
        <end position="237"/>
    </location>
</feature>
<organism>
    <name type="scientific">Acidobacterium capsulatum (strain ATCC 51196 / DSM 11244 / BCRC 80197 / JCM 7670 / NBRC 15755 / NCIMB 13165 / 161)</name>
    <dbReference type="NCBI Taxonomy" id="240015"/>
    <lineage>
        <taxon>Bacteria</taxon>
        <taxon>Pseudomonadati</taxon>
        <taxon>Acidobacteriota</taxon>
        <taxon>Terriglobia</taxon>
        <taxon>Terriglobales</taxon>
        <taxon>Acidobacteriaceae</taxon>
        <taxon>Acidobacterium</taxon>
    </lineage>
</organism>
<keyword id="KW-0963">Cytoplasm</keyword>
<keyword id="KW-0227">DNA damage</keyword>
<keyword id="KW-0228">DNA excision</keyword>
<keyword id="KW-0234">DNA repair</keyword>
<keyword id="KW-0267">Excision nuclease</keyword>
<keyword id="KW-1185">Reference proteome</keyword>
<keyword id="KW-0742">SOS response</keyword>
<dbReference type="EMBL" id="CP001472">
    <property type="protein sequence ID" value="ACO34289.1"/>
    <property type="molecule type" value="Genomic_DNA"/>
</dbReference>
<dbReference type="RefSeq" id="WP_015896390.1">
    <property type="nucleotide sequence ID" value="NC_012483.1"/>
</dbReference>
<dbReference type="SMR" id="C1F4W9"/>
<dbReference type="FunCoup" id="C1F4W9">
    <property type="interactions" value="232"/>
</dbReference>
<dbReference type="STRING" id="240015.ACP_1243"/>
<dbReference type="KEGG" id="aca:ACP_1243"/>
<dbReference type="eggNOG" id="COG0322">
    <property type="taxonomic scope" value="Bacteria"/>
</dbReference>
<dbReference type="HOGENOM" id="CLU_014841_3_2_0"/>
<dbReference type="InParanoid" id="C1F4W9"/>
<dbReference type="OrthoDB" id="9804933at2"/>
<dbReference type="Proteomes" id="UP000002207">
    <property type="component" value="Chromosome"/>
</dbReference>
<dbReference type="GO" id="GO:0005737">
    <property type="term" value="C:cytoplasm"/>
    <property type="evidence" value="ECO:0007669"/>
    <property type="project" value="UniProtKB-SubCell"/>
</dbReference>
<dbReference type="GO" id="GO:0009380">
    <property type="term" value="C:excinuclease repair complex"/>
    <property type="evidence" value="ECO:0007669"/>
    <property type="project" value="InterPro"/>
</dbReference>
<dbReference type="GO" id="GO:0003677">
    <property type="term" value="F:DNA binding"/>
    <property type="evidence" value="ECO:0007669"/>
    <property type="project" value="UniProtKB-UniRule"/>
</dbReference>
<dbReference type="GO" id="GO:0009381">
    <property type="term" value="F:excinuclease ABC activity"/>
    <property type="evidence" value="ECO:0007669"/>
    <property type="project" value="UniProtKB-UniRule"/>
</dbReference>
<dbReference type="GO" id="GO:0006289">
    <property type="term" value="P:nucleotide-excision repair"/>
    <property type="evidence" value="ECO:0007669"/>
    <property type="project" value="UniProtKB-UniRule"/>
</dbReference>
<dbReference type="GO" id="GO:0009432">
    <property type="term" value="P:SOS response"/>
    <property type="evidence" value="ECO:0007669"/>
    <property type="project" value="UniProtKB-UniRule"/>
</dbReference>
<dbReference type="CDD" id="cd10434">
    <property type="entry name" value="GIY-YIG_UvrC_Cho"/>
    <property type="match status" value="1"/>
</dbReference>
<dbReference type="FunFam" id="3.30.420.340:FF:000001">
    <property type="entry name" value="UvrABC system protein C"/>
    <property type="match status" value="1"/>
</dbReference>
<dbReference type="FunFam" id="3.40.1440.10:FF:000001">
    <property type="entry name" value="UvrABC system protein C"/>
    <property type="match status" value="1"/>
</dbReference>
<dbReference type="Gene3D" id="1.10.150.20">
    <property type="entry name" value="5' to 3' exonuclease, C-terminal subdomain"/>
    <property type="match status" value="1"/>
</dbReference>
<dbReference type="Gene3D" id="3.40.1440.10">
    <property type="entry name" value="GIY-YIG endonuclease"/>
    <property type="match status" value="1"/>
</dbReference>
<dbReference type="Gene3D" id="3.30.420.340">
    <property type="entry name" value="UvrC, RNAse H endonuclease domain"/>
    <property type="match status" value="1"/>
</dbReference>
<dbReference type="HAMAP" id="MF_00203">
    <property type="entry name" value="UvrC"/>
    <property type="match status" value="1"/>
</dbReference>
<dbReference type="InterPro" id="IPR000305">
    <property type="entry name" value="GIY-YIG_endonuc"/>
</dbReference>
<dbReference type="InterPro" id="IPR035901">
    <property type="entry name" value="GIY-YIG_endonuc_sf"/>
</dbReference>
<dbReference type="InterPro" id="IPR047296">
    <property type="entry name" value="GIY-YIG_UvrC_Cho"/>
</dbReference>
<dbReference type="InterPro" id="IPR010994">
    <property type="entry name" value="RuvA_2-like"/>
</dbReference>
<dbReference type="InterPro" id="IPR001943">
    <property type="entry name" value="UVR_dom"/>
</dbReference>
<dbReference type="InterPro" id="IPR036876">
    <property type="entry name" value="UVR_dom_sf"/>
</dbReference>
<dbReference type="InterPro" id="IPR050066">
    <property type="entry name" value="UvrABC_protein_C"/>
</dbReference>
<dbReference type="InterPro" id="IPR004791">
    <property type="entry name" value="UvrC"/>
</dbReference>
<dbReference type="InterPro" id="IPR001162">
    <property type="entry name" value="UvrC_RNase_H_dom"/>
</dbReference>
<dbReference type="InterPro" id="IPR038476">
    <property type="entry name" value="UvrC_RNase_H_dom_sf"/>
</dbReference>
<dbReference type="NCBIfam" id="NF001824">
    <property type="entry name" value="PRK00558.1-5"/>
    <property type="match status" value="1"/>
</dbReference>
<dbReference type="NCBIfam" id="NF011263">
    <property type="entry name" value="PRK14669.1"/>
    <property type="match status" value="1"/>
</dbReference>
<dbReference type="NCBIfam" id="TIGR00194">
    <property type="entry name" value="uvrC"/>
    <property type="match status" value="1"/>
</dbReference>
<dbReference type="PANTHER" id="PTHR30562:SF1">
    <property type="entry name" value="UVRABC SYSTEM PROTEIN C"/>
    <property type="match status" value="1"/>
</dbReference>
<dbReference type="PANTHER" id="PTHR30562">
    <property type="entry name" value="UVRC/OXIDOREDUCTASE"/>
    <property type="match status" value="1"/>
</dbReference>
<dbReference type="Pfam" id="PF01541">
    <property type="entry name" value="GIY-YIG"/>
    <property type="match status" value="1"/>
</dbReference>
<dbReference type="Pfam" id="PF14520">
    <property type="entry name" value="HHH_5"/>
    <property type="match status" value="1"/>
</dbReference>
<dbReference type="Pfam" id="PF02151">
    <property type="entry name" value="UVR"/>
    <property type="match status" value="1"/>
</dbReference>
<dbReference type="Pfam" id="PF22920">
    <property type="entry name" value="UvrC_RNaseH"/>
    <property type="match status" value="1"/>
</dbReference>
<dbReference type="Pfam" id="PF08459">
    <property type="entry name" value="UvrC_RNaseH_dom"/>
    <property type="match status" value="1"/>
</dbReference>
<dbReference type="SMART" id="SM00465">
    <property type="entry name" value="GIYc"/>
    <property type="match status" value="1"/>
</dbReference>
<dbReference type="SUPFAM" id="SSF46600">
    <property type="entry name" value="C-terminal UvrC-binding domain of UvrB"/>
    <property type="match status" value="1"/>
</dbReference>
<dbReference type="SUPFAM" id="SSF82771">
    <property type="entry name" value="GIY-YIG endonuclease"/>
    <property type="match status" value="1"/>
</dbReference>
<dbReference type="SUPFAM" id="SSF47781">
    <property type="entry name" value="RuvA domain 2-like"/>
    <property type="match status" value="1"/>
</dbReference>
<dbReference type="PROSITE" id="PS50164">
    <property type="entry name" value="GIY_YIG"/>
    <property type="match status" value="1"/>
</dbReference>
<dbReference type="PROSITE" id="PS50151">
    <property type="entry name" value="UVR"/>
    <property type="match status" value="1"/>
</dbReference>
<dbReference type="PROSITE" id="PS50165">
    <property type="entry name" value="UVRC"/>
    <property type="match status" value="1"/>
</dbReference>
<sequence>MDLQEKIRTLPTGPGVYLYKNADGEVIYVGKAKNLRSRVRSYLLEASQANAKTGSLMREAVDLDYITVGNEHEALALENNLIKQRKPRFNVLLRDDKTYPYVKLTLGDRYPKVFVTRRLRKDGAAYYGPFFPGNLAYRIVDLIHRSFLLPSCKVDLSRYHARACLQYYIKRCLGPCVKHLTTPEAYREAVRDAQWFLEGRGADLERSLEVRMQEAAAAEQFELAAKYRDLLVTLHQLQEKQRVASADDDDADVFGYHYENGMLAVNLFHMRGGKMVDRREFFWEELPEFMEEGAQEEEVLPAQAEGRGEVQVELRFEPGAFFSALLKQIYIEQPYVPRSIYVPVNFADREALAGLLAEQTHHRIELAVPQRGDKRSLVDLAGQNARQSYEQRFRVMQPNQKAIQEALQDALMLEELPRRIECFDISHIQGAETVASMVVWENGAMKKADYRKFQIKTVSGVDDFASMREVLTRRYRRVIEEKQAMPDVILIDGGIGQLRAAAAALEELGQTTQTVASIAKREEIIYLYGHEDEPIVLERRSPVLHLVQRIRDESHRFAIAYHRKRREMRDRDSELLEIPGVGTRTRTRLLEHFGSLRGVRKADVEALTAVVPRPTAEAIAAHFQGEKAEPEAAAGLVRIDESKTV</sequence>
<name>UVRC_ACIC5</name>
<protein>
    <recommendedName>
        <fullName evidence="1">UvrABC system protein C</fullName>
        <shortName evidence="1">Protein UvrC</shortName>
    </recommendedName>
    <alternativeName>
        <fullName evidence="1">Excinuclease ABC subunit C</fullName>
    </alternativeName>
</protein>
<reference key="1">
    <citation type="journal article" date="2009" name="Appl. Environ. Microbiol.">
        <title>Three genomes from the phylum Acidobacteria provide insight into the lifestyles of these microorganisms in soils.</title>
        <authorList>
            <person name="Ward N.L."/>
            <person name="Challacombe J.F."/>
            <person name="Janssen P.H."/>
            <person name="Henrissat B."/>
            <person name="Coutinho P.M."/>
            <person name="Wu M."/>
            <person name="Xie G."/>
            <person name="Haft D.H."/>
            <person name="Sait M."/>
            <person name="Badger J."/>
            <person name="Barabote R.D."/>
            <person name="Bradley B."/>
            <person name="Brettin T.S."/>
            <person name="Brinkac L.M."/>
            <person name="Bruce D."/>
            <person name="Creasy T."/>
            <person name="Daugherty S.C."/>
            <person name="Davidsen T.M."/>
            <person name="DeBoy R.T."/>
            <person name="Detter J.C."/>
            <person name="Dodson R.J."/>
            <person name="Durkin A.S."/>
            <person name="Ganapathy A."/>
            <person name="Gwinn-Giglio M."/>
            <person name="Han C.S."/>
            <person name="Khouri H."/>
            <person name="Kiss H."/>
            <person name="Kothari S.P."/>
            <person name="Madupu R."/>
            <person name="Nelson K.E."/>
            <person name="Nelson W.C."/>
            <person name="Paulsen I."/>
            <person name="Penn K."/>
            <person name="Ren Q."/>
            <person name="Rosovitz M.J."/>
            <person name="Selengut J.D."/>
            <person name="Shrivastava S."/>
            <person name="Sullivan S.A."/>
            <person name="Tapia R."/>
            <person name="Thompson L.S."/>
            <person name="Watkins K.L."/>
            <person name="Yang Q."/>
            <person name="Yu C."/>
            <person name="Zafar N."/>
            <person name="Zhou L."/>
            <person name="Kuske C.R."/>
        </authorList>
    </citation>
    <scope>NUCLEOTIDE SEQUENCE [LARGE SCALE GENOMIC DNA]</scope>
    <source>
        <strain>ATCC 51196 / DSM 11244 / BCRC 80197 / JCM 7670 / NBRC 15755 / NCIMB 13165 / 161</strain>
    </source>
</reference>
<accession>C1F4W9</accession>
<comment type="function">
    <text evidence="1">The UvrABC repair system catalyzes the recognition and processing of DNA lesions. UvrC both incises the 5' and 3' sides of the lesion. The N-terminal half is responsible for the 3' incision and the C-terminal half is responsible for the 5' incision.</text>
</comment>
<comment type="subunit">
    <text evidence="1">Interacts with UvrB in an incision complex.</text>
</comment>
<comment type="subcellular location">
    <subcellularLocation>
        <location evidence="1">Cytoplasm</location>
    </subcellularLocation>
</comment>
<comment type="similarity">
    <text evidence="1">Belongs to the UvrC family.</text>
</comment>